<dbReference type="EC" id="4.1.1.-" evidence="1"/>
<dbReference type="EMBL" id="MK182094">
    <property type="protein sequence ID" value="QCL09106.1"/>
    <property type="molecule type" value="Genomic_DNA"/>
</dbReference>
<dbReference type="GO" id="GO:0016829">
    <property type="term" value="F:lyase activity"/>
    <property type="evidence" value="ECO:0007669"/>
    <property type="project" value="UniProtKB-KW"/>
</dbReference>
<dbReference type="GO" id="GO:0016491">
    <property type="term" value="F:oxidoreductase activity"/>
    <property type="evidence" value="ECO:0007669"/>
    <property type="project" value="InterPro"/>
</dbReference>
<dbReference type="Gene3D" id="3.30.70.100">
    <property type="match status" value="1"/>
</dbReference>
<dbReference type="InterPro" id="IPR011008">
    <property type="entry name" value="Dimeric_a/b-barrel"/>
</dbReference>
<dbReference type="InterPro" id="IPR009799">
    <property type="entry name" value="EthD_dom"/>
</dbReference>
<dbReference type="Pfam" id="PF07110">
    <property type="entry name" value="EthD"/>
    <property type="match status" value="1"/>
</dbReference>
<dbReference type="SUPFAM" id="SSF54909">
    <property type="entry name" value="Dimeric alpha+beta barrel"/>
    <property type="match status" value="1"/>
</dbReference>
<protein>
    <recommendedName>
        <fullName evidence="1">Decarboxylase dmxR15</fullName>
        <ecNumber evidence="1">4.1.1.-</ecNumber>
    </recommendedName>
    <alternativeName>
        <fullName evidence="4">Dimeric xanthone biosynthesis cluster protein R15</fullName>
    </alternativeName>
</protein>
<evidence type="ECO:0000250" key="1">
    <source>
        <dbReference type="UniProtKB" id="P0DOB3"/>
    </source>
</evidence>
<evidence type="ECO:0000255" key="2"/>
<evidence type="ECO:0000269" key="3">
    <source>
    </source>
</evidence>
<evidence type="ECO:0000303" key="4">
    <source>
    </source>
</evidence>
<evidence type="ECO:0000305" key="5"/>
<evidence type="ECO:0000305" key="6">
    <source>
    </source>
</evidence>
<sequence>MSVLNESEALAPSFSTKDKYLCLTICGYRKPGMSEGDYRNHMVNVSAPMTKDLMVKYGVKRWTQIHNQSATRALMSQLFDPQMCNLADFDCFSQVFFRNIDDYKRMKLDPWYKKHLMHDHEVFADTKRSMMTIGWVEEFNGFENVL</sequence>
<organism>
    <name type="scientific">Cryptosporiopsis sp. (strain 8999)</name>
    <dbReference type="NCBI Taxonomy" id="2572248"/>
    <lineage>
        <taxon>Eukaryota</taxon>
        <taxon>Fungi</taxon>
        <taxon>Dikarya</taxon>
        <taxon>Ascomycota</taxon>
        <taxon>Pezizomycotina</taxon>
        <taxon>Leotiomycetes</taxon>
        <taxon>Helotiales</taxon>
        <taxon>Dermateaceae</taxon>
        <taxon>Cryptosporiopsis</taxon>
    </lineage>
</organism>
<keyword id="KW-0456">Lyase</keyword>
<feature type="chain" id="PRO_0000453436" description="Decarboxylase dmxR15">
    <location>
        <begin position="1"/>
        <end position="146"/>
    </location>
</feature>
<feature type="domain" description="EthD" evidence="2">
    <location>
        <begin position="31"/>
        <end position="126"/>
    </location>
</feature>
<comment type="function">
    <text evidence="3 6">Decarboxylase; part of the gene cluster that mediates the biosynthesis of the dimeric xanthones cryptosporioptides (PubMed:30996871). The pathway begins with the synthesis of atrochrysone thioester by the polyketide synthase dmx-nrPKS (Probable). The atrochrysone carboxyl ACP thioesterase dmxR1 then breaks the thioester bond and releases the atrochrysone carboxylic acid from dmx-nrPKS (Probable). Atrochrysone carboxylic acid is decarboxylated by the decarboxylase dmxR15, and oxidized by the anthrone oxygenase dmxR16 to yield emodin (Probable). Emodin is then reduced to emodin hydroquinone by the oxidoreductase dmxR7 (Probable). A-ring reduction by the short chain dehydrogenase dmxR18, dehydration by the scytalone dehydratase-like protein dmxR17 and probable spontaneous re-oxidation, results in overall deoxygenation to chrysophanol (PubMed:30996871). Baeyer-Villiger oxidation by the Baeyer-Villiger monooxygenase (BVMO) dmxR6 then yields monodictylactone in equilibrium with monodictyphenone (PubMed:30996871). In the case of the cryptosporioptides biosynthesis, monodictylactone is reduced at C-12 to an alcohol (by the short chain dehydrogenases dmxR12 or dmxR8) and hydroxylated at C-5 by dmxR9, yielding the electron-rich aromatic which could eliminate H(2)O to form the ortho-quinonemethide, followed by tautomerisation to paraquinone and complete the formal reduction to produce the 10-methylgroup (Probable). Conjugate addition of C-4a-OH to the resulting paraquinone by the monooxygenase dmxR10 then gives cyclohexadienone, which is then reduced at C-5 by the short chain dehydrogenase dmxR3 to give the dihydroxanthone (Probable). The 6,7-epoxide in the cryptosporioptides could be introduced by the cytochrome P450 monooxygenase dmxL3 (Probable). The highly reducing PKS dmxL2 manufactures butyrate, which is further carboxylated by dmxL1 to form ethylmalonate (PubMed:30996871). It is not yet clear whether the carboxylation occurs while the butyrate is attached to the ACP of dmxL2, but this unusual fungal metabolite could then be esterified to O-5 by the O-acetyltransferase dmxR13 (PubMed:30996871). Finally, dimerization performed by dmxR5 gives the observed dimers cryptosporioptides A, B and C as the final products of the pathway (PubMed:30996871).</text>
</comment>
<comment type="catalytic activity">
    <reaction evidence="1">
        <text>atrochrysone carboxylate + H(+) = atrochrysone + CO2</text>
        <dbReference type="Rhea" id="RHEA:64264"/>
        <dbReference type="ChEBI" id="CHEBI:15378"/>
        <dbReference type="ChEBI" id="CHEBI:16526"/>
        <dbReference type="ChEBI" id="CHEBI:149713"/>
        <dbReference type="ChEBI" id="CHEBI:150016"/>
    </reaction>
    <physiologicalReaction direction="left-to-right" evidence="1">
        <dbReference type="Rhea" id="RHEA:64265"/>
    </physiologicalReaction>
</comment>
<comment type="pathway">
    <text evidence="6">Secondary metabolite biosynthesis.</text>
</comment>
<comment type="similarity">
    <text evidence="5">Belongs to the tpcK family.</text>
</comment>
<reference key="1">
    <citation type="journal article" date="2019" name="Chem. Sci.">
        <title>Structure revision of cryptosporioptides and determination of the genetic basis for dimeric xanthone biosynthesis in fungi.</title>
        <authorList>
            <person name="Greco C."/>
            <person name="de Mattos-Shipley K."/>
            <person name="Bailey A.M."/>
            <person name="Mulholland N.P."/>
            <person name="Vincent J.L."/>
            <person name="Willis C.L."/>
            <person name="Cox R.J."/>
            <person name="Simpson T.J."/>
        </authorList>
    </citation>
    <scope>NUCLEOTIDE SEQUENCE [GENOMIC DNA]</scope>
    <scope>FUNCTION</scope>
    <scope>PATHWAY</scope>
    <source>
        <strain>8999</strain>
    </source>
</reference>
<proteinExistence type="inferred from homology"/>
<gene>
    <name evidence="4" type="primary">dmxR15</name>
</gene>
<name>DMR15_CRYX8</name>
<accession>A0A4P8DJD9</accession>